<reference key="1">
    <citation type="journal article" date="2003" name="Nature">
        <title>The genome sequence of Bacillus anthracis Ames and comparison to closely related bacteria.</title>
        <authorList>
            <person name="Read T.D."/>
            <person name="Peterson S.N."/>
            <person name="Tourasse N.J."/>
            <person name="Baillie L.W."/>
            <person name="Paulsen I.T."/>
            <person name="Nelson K.E."/>
            <person name="Tettelin H."/>
            <person name="Fouts D.E."/>
            <person name="Eisen J.A."/>
            <person name="Gill S.R."/>
            <person name="Holtzapple E.K."/>
            <person name="Okstad O.A."/>
            <person name="Helgason E."/>
            <person name="Rilstone J."/>
            <person name="Wu M."/>
            <person name="Kolonay J.F."/>
            <person name="Beanan M.J."/>
            <person name="Dodson R.J."/>
            <person name="Brinkac L.M."/>
            <person name="Gwinn M.L."/>
            <person name="DeBoy R.T."/>
            <person name="Madpu R."/>
            <person name="Daugherty S.C."/>
            <person name="Durkin A.S."/>
            <person name="Haft D.H."/>
            <person name="Nelson W.C."/>
            <person name="Peterson J.D."/>
            <person name="Pop M."/>
            <person name="Khouri H.M."/>
            <person name="Radune D."/>
            <person name="Benton J.L."/>
            <person name="Mahamoud Y."/>
            <person name="Jiang L."/>
            <person name="Hance I.R."/>
            <person name="Weidman J.F."/>
            <person name="Berry K.J."/>
            <person name="Plaut R.D."/>
            <person name="Wolf A.M."/>
            <person name="Watkins K.L."/>
            <person name="Nierman W.C."/>
            <person name="Hazen A."/>
            <person name="Cline R.T."/>
            <person name="Redmond C."/>
            <person name="Thwaite J.E."/>
            <person name="White O."/>
            <person name="Salzberg S.L."/>
            <person name="Thomason B."/>
            <person name="Friedlander A.M."/>
            <person name="Koehler T.M."/>
            <person name="Hanna P.C."/>
            <person name="Kolstoe A.-B."/>
            <person name="Fraser C.M."/>
        </authorList>
    </citation>
    <scope>NUCLEOTIDE SEQUENCE [LARGE SCALE GENOMIC DNA]</scope>
    <source>
        <strain>Ames / isolate Porton</strain>
    </source>
</reference>
<reference key="2">
    <citation type="journal article" date="2009" name="J. Bacteriol.">
        <title>The complete genome sequence of Bacillus anthracis Ames 'Ancestor'.</title>
        <authorList>
            <person name="Ravel J."/>
            <person name="Jiang L."/>
            <person name="Stanley S.T."/>
            <person name="Wilson M.R."/>
            <person name="Decker R.S."/>
            <person name="Read T.D."/>
            <person name="Worsham P."/>
            <person name="Keim P.S."/>
            <person name="Salzberg S.L."/>
            <person name="Fraser-Liggett C.M."/>
            <person name="Rasko D.A."/>
        </authorList>
    </citation>
    <scope>NUCLEOTIDE SEQUENCE [LARGE SCALE GENOMIC DNA]</scope>
    <source>
        <strain>Ames ancestor</strain>
    </source>
</reference>
<reference key="3">
    <citation type="submission" date="2004-01" db="EMBL/GenBank/DDBJ databases">
        <title>Complete genome sequence of Bacillus anthracis Sterne.</title>
        <authorList>
            <person name="Brettin T.S."/>
            <person name="Bruce D."/>
            <person name="Challacombe J.F."/>
            <person name="Gilna P."/>
            <person name="Han C."/>
            <person name="Hill K."/>
            <person name="Hitchcock P."/>
            <person name="Jackson P."/>
            <person name="Keim P."/>
            <person name="Longmire J."/>
            <person name="Lucas S."/>
            <person name="Okinaka R."/>
            <person name="Richardson P."/>
            <person name="Rubin E."/>
            <person name="Tice H."/>
        </authorList>
    </citation>
    <scope>NUCLEOTIDE SEQUENCE [LARGE SCALE GENOMIC DNA]</scope>
    <source>
        <strain>Sterne</strain>
    </source>
</reference>
<dbReference type="EC" id="2.1.2.11" evidence="1"/>
<dbReference type="EMBL" id="AE016879">
    <property type="protein sequence ID" value="AAP25498.1"/>
    <property type="molecule type" value="Genomic_DNA"/>
</dbReference>
<dbReference type="EMBL" id="AE017334">
    <property type="protein sequence ID" value="AAT30659.2"/>
    <property type="molecule type" value="Genomic_DNA"/>
</dbReference>
<dbReference type="EMBL" id="AE017225">
    <property type="protein sequence ID" value="AAT53769.1"/>
    <property type="molecule type" value="Genomic_DNA"/>
</dbReference>
<dbReference type="RefSeq" id="NP_844012.1">
    <property type="nucleotide sequence ID" value="NC_003997.3"/>
</dbReference>
<dbReference type="RefSeq" id="WP_000851103.1">
    <property type="nucleotide sequence ID" value="NZ_WXXJ01000001.1"/>
</dbReference>
<dbReference type="RefSeq" id="YP_027718.1">
    <property type="nucleotide sequence ID" value="NC_005945.1"/>
</dbReference>
<dbReference type="SMR" id="Q81ST3"/>
<dbReference type="IntAct" id="Q81ST3">
    <property type="interactions" value="4"/>
</dbReference>
<dbReference type="STRING" id="261594.GBAA_1562"/>
<dbReference type="DNASU" id="1084235"/>
<dbReference type="GeneID" id="45021534"/>
<dbReference type="KEGG" id="ban:BA_1562"/>
<dbReference type="KEGG" id="bar:GBAA_1562"/>
<dbReference type="KEGG" id="bat:BAS1449"/>
<dbReference type="PATRIC" id="fig|198094.11.peg.1532"/>
<dbReference type="eggNOG" id="COG0413">
    <property type="taxonomic scope" value="Bacteria"/>
</dbReference>
<dbReference type="HOGENOM" id="CLU_036645_1_0_9"/>
<dbReference type="OMA" id="VLVWTDM"/>
<dbReference type="OrthoDB" id="9781789at2"/>
<dbReference type="UniPathway" id="UPA00028">
    <property type="reaction ID" value="UER00003"/>
</dbReference>
<dbReference type="Proteomes" id="UP000000427">
    <property type="component" value="Chromosome"/>
</dbReference>
<dbReference type="Proteomes" id="UP000000594">
    <property type="component" value="Chromosome"/>
</dbReference>
<dbReference type="GO" id="GO:0005737">
    <property type="term" value="C:cytoplasm"/>
    <property type="evidence" value="ECO:0007669"/>
    <property type="project" value="UniProtKB-SubCell"/>
</dbReference>
<dbReference type="GO" id="GO:0003864">
    <property type="term" value="F:3-methyl-2-oxobutanoate hydroxymethyltransferase activity"/>
    <property type="evidence" value="ECO:0007669"/>
    <property type="project" value="UniProtKB-UniRule"/>
</dbReference>
<dbReference type="GO" id="GO:0000287">
    <property type="term" value="F:magnesium ion binding"/>
    <property type="evidence" value="ECO:0007669"/>
    <property type="project" value="TreeGrafter"/>
</dbReference>
<dbReference type="GO" id="GO:0015940">
    <property type="term" value="P:pantothenate biosynthetic process"/>
    <property type="evidence" value="ECO:0007669"/>
    <property type="project" value="UniProtKB-UniRule"/>
</dbReference>
<dbReference type="CDD" id="cd06557">
    <property type="entry name" value="KPHMT-like"/>
    <property type="match status" value="1"/>
</dbReference>
<dbReference type="FunFam" id="3.20.20.60:FF:000003">
    <property type="entry name" value="3-methyl-2-oxobutanoate hydroxymethyltransferase"/>
    <property type="match status" value="1"/>
</dbReference>
<dbReference type="Gene3D" id="3.20.20.60">
    <property type="entry name" value="Phosphoenolpyruvate-binding domains"/>
    <property type="match status" value="1"/>
</dbReference>
<dbReference type="HAMAP" id="MF_00156">
    <property type="entry name" value="PanB"/>
    <property type="match status" value="1"/>
</dbReference>
<dbReference type="InterPro" id="IPR003700">
    <property type="entry name" value="Pantoate_hydroxy_MeTrfase"/>
</dbReference>
<dbReference type="InterPro" id="IPR015813">
    <property type="entry name" value="Pyrv/PenolPyrv_kinase-like_dom"/>
</dbReference>
<dbReference type="InterPro" id="IPR040442">
    <property type="entry name" value="Pyrv_kinase-like_dom_sf"/>
</dbReference>
<dbReference type="NCBIfam" id="TIGR00222">
    <property type="entry name" value="panB"/>
    <property type="match status" value="1"/>
</dbReference>
<dbReference type="NCBIfam" id="NF001452">
    <property type="entry name" value="PRK00311.1"/>
    <property type="match status" value="1"/>
</dbReference>
<dbReference type="PANTHER" id="PTHR20881">
    <property type="entry name" value="3-METHYL-2-OXOBUTANOATE HYDROXYMETHYLTRANSFERASE"/>
    <property type="match status" value="1"/>
</dbReference>
<dbReference type="PANTHER" id="PTHR20881:SF0">
    <property type="entry name" value="3-METHYL-2-OXOBUTANOATE HYDROXYMETHYLTRANSFERASE"/>
    <property type="match status" value="1"/>
</dbReference>
<dbReference type="Pfam" id="PF02548">
    <property type="entry name" value="Pantoate_transf"/>
    <property type="match status" value="1"/>
</dbReference>
<dbReference type="PIRSF" id="PIRSF000388">
    <property type="entry name" value="Pantoate_hydroxy_MeTrfase"/>
    <property type="match status" value="1"/>
</dbReference>
<dbReference type="SUPFAM" id="SSF51621">
    <property type="entry name" value="Phosphoenolpyruvate/pyruvate domain"/>
    <property type="match status" value="1"/>
</dbReference>
<gene>
    <name evidence="1" type="primary">panB</name>
    <name type="ordered locus">BA_1562</name>
    <name type="ordered locus">GBAA_1562</name>
    <name type="ordered locus">BAS1449</name>
</gene>
<keyword id="KW-0963">Cytoplasm</keyword>
<keyword id="KW-0460">Magnesium</keyword>
<keyword id="KW-0479">Metal-binding</keyword>
<keyword id="KW-0566">Pantothenate biosynthesis</keyword>
<keyword id="KW-1185">Reference proteome</keyword>
<keyword id="KW-0808">Transferase</keyword>
<proteinExistence type="inferred from homology"/>
<evidence type="ECO:0000255" key="1">
    <source>
        <dbReference type="HAMAP-Rule" id="MF_00156"/>
    </source>
</evidence>
<feature type="chain" id="PRO_0000184808" description="3-methyl-2-oxobutanoate hydroxymethyltransferase">
    <location>
        <begin position="1"/>
        <end position="279"/>
    </location>
</feature>
<feature type="active site" description="Proton acceptor" evidence="1">
    <location>
        <position position="181"/>
    </location>
</feature>
<feature type="binding site" evidence="1">
    <location>
        <begin position="43"/>
        <end position="44"/>
    </location>
    <ligand>
        <name>3-methyl-2-oxobutanoate</name>
        <dbReference type="ChEBI" id="CHEBI:11851"/>
    </ligand>
</feature>
<feature type="binding site" evidence="1">
    <location>
        <position position="43"/>
    </location>
    <ligand>
        <name>Mg(2+)</name>
        <dbReference type="ChEBI" id="CHEBI:18420"/>
    </ligand>
</feature>
<feature type="binding site" evidence="1">
    <location>
        <position position="82"/>
    </location>
    <ligand>
        <name>3-methyl-2-oxobutanoate</name>
        <dbReference type="ChEBI" id="CHEBI:11851"/>
    </ligand>
</feature>
<feature type="binding site" evidence="1">
    <location>
        <position position="82"/>
    </location>
    <ligand>
        <name>Mg(2+)</name>
        <dbReference type="ChEBI" id="CHEBI:18420"/>
    </ligand>
</feature>
<feature type="binding site" evidence="1">
    <location>
        <position position="112"/>
    </location>
    <ligand>
        <name>3-methyl-2-oxobutanoate</name>
        <dbReference type="ChEBI" id="CHEBI:11851"/>
    </ligand>
</feature>
<feature type="binding site" evidence="1">
    <location>
        <position position="114"/>
    </location>
    <ligand>
        <name>Mg(2+)</name>
        <dbReference type="ChEBI" id="CHEBI:18420"/>
    </ligand>
</feature>
<protein>
    <recommendedName>
        <fullName evidence="1">3-methyl-2-oxobutanoate hydroxymethyltransferase</fullName>
        <ecNumber evidence="1">2.1.2.11</ecNumber>
    </recommendedName>
    <alternativeName>
        <fullName evidence="1">Ketopantoate hydroxymethyltransferase</fullName>
        <shortName evidence="1">KPHMT</shortName>
    </alternativeName>
</protein>
<organism>
    <name type="scientific">Bacillus anthracis</name>
    <dbReference type="NCBI Taxonomy" id="1392"/>
    <lineage>
        <taxon>Bacteria</taxon>
        <taxon>Bacillati</taxon>
        <taxon>Bacillota</taxon>
        <taxon>Bacilli</taxon>
        <taxon>Bacillales</taxon>
        <taxon>Bacillaceae</taxon>
        <taxon>Bacillus</taxon>
        <taxon>Bacillus cereus group</taxon>
    </lineage>
</organism>
<accession>Q81ST3</accession>
<accession>Q6I113</accession>
<accession>Q6KUW7</accession>
<comment type="function">
    <text evidence="1">Catalyzes the reversible reaction in which hydroxymethyl group from 5,10-methylenetetrahydrofolate is transferred onto alpha-ketoisovalerate to form ketopantoate.</text>
</comment>
<comment type="catalytic activity">
    <reaction evidence="1">
        <text>3-methyl-2-oxobutanoate + (6R)-5,10-methylene-5,6,7,8-tetrahydrofolate + H2O = 2-dehydropantoate + (6S)-5,6,7,8-tetrahydrofolate</text>
        <dbReference type="Rhea" id="RHEA:11824"/>
        <dbReference type="ChEBI" id="CHEBI:11561"/>
        <dbReference type="ChEBI" id="CHEBI:11851"/>
        <dbReference type="ChEBI" id="CHEBI:15377"/>
        <dbReference type="ChEBI" id="CHEBI:15636"/>
        <dbReference type="ChEBI" id="CHEBI:57453"/>
        <dbReference type="EC" id="2.1.2.11"/>
    </reaction>
</comment>
<comment type="cofactor">
    <cofactor evidence="1">
        <name>Mg(2+)</name>
        <dbReference type="ChEBI" id="CHEBI:18420"/>
    </cofactor>
    <text evidence="1">Binds 1 Mg(2+) ion per subunit.</text>
</comment>
<comment type="pathway">
    <text evidence="1">Cofactor biosynthesis; (R)-pantothenate biosynthesis; (R)-pantoate from 3-methyl-2-oxobutanoate: step 1/2.</text>
</comment>
<comment type="subunit">
    <text evidence="1">Homodecamer; pentamer of dimers.</text>
</comment>
<comment type="subcellular location">
    <subcellularLocation>
        <location evidence="1">Cytoplasm</location>
    </subcellularLocation>
</comment>
<comment type="similarity">
    <text evidence="1">Belongs to the PanB family.</text>
</comment>
<name>PANB_BACAN</name>
<sequence>MKTKTDFLKMKEQGEPITMLTAYDYPSAKLAEEAEVDMILVGDSLGMVVLGYDSTVPVTVEDMIHHTKAVRRGAKETFIVTDMPFMSYHVSLQDTMVNARRIVQESGAHALKVEGAGEVISTIHYLTNAGIPVVAHLGLTPQSVGVLGGYKVQGKDAESAKKLIEDAKKCEEAGAIALVLECVPMQLAELISEQLTIPTIGIGAGQKVDGQVLVYHDLISYGVNRVPKFVKQYTSVQEEIVRGISQYVAEVKTRQFPEEKHSFTMKEEECLALYGGKQS</sequence>